<protein>
    <recommendedName>
        <fullName evidence="1">UDP-N-acetylmuramate--L-alanine ligase</fullName>
        <ecNumber evidence="1">6.3.2.8</ecNumber>
    </recommendedName>
    <alternativeName>
        <fullName evidence="1">UDP-N-acetylmuramoyl-L-alanine synthetase</fullName>
    </alternativeName>
</protein>
<name>MURC_LACJO</name>
<reference key="1">
    <citation type="journal article" date="2004" name="Proc. Natl. Acad. Sci. U.S.A.">
        <title>The genome sequence of the probiotic intestinal bacterium Lactobacillus johnsonii NCC 533.</title>
        <authorList>
            <person name="Pridmore R.D."/>
            <person name="Berger B."/>
            <person name="Desiere F."/>
            <person name="Vilanova D."/>
            <person name="Barretto C."/>
            <person name="Pittet A.-C."/>
            <person name="Zwahlen M.-C."/>
            <person name="Rouvet M."/>
            <person name="Altermann E."/>
            <person name="Barrangou R."/>
            <person name="Mollet B."/>
            <person name="Mercenier A."/>
            <person name="Klaenhammer T."/>
            <person name="Arigoni F."/>
            <person name="Schell M.A."/>
        </authorList>
    </citation>
    <scope>NUCLEOTIDE SEQUENCE [LARGE SCALE GENOMIC DNA]</scope>
    <source>
        <strain>CNCM I-1225 / La1 / NCC 533</strain>
    </source>
</reference>
<proteinExistence type="inferred from homology"/>
<feature type="chain" id="PRO_0000182105" description="UDP-N-acetylmuramate--L-alanine ligase">
    <location>
        <begin position="1"/>
        <end position="437"/>
    </location>
</feature>
<feature type="binding site" evidence="1">
    <location>
        <begin position="114"/>
        <end position="120"/>
    </location>
    <ligand>
        <name>ATP</name>
        <dbReference type="ChEBI" id="CHEBI:30616"/>
    </ligand>
</feature>
<gene>
    <name evidence="1" type="primary">murC</name>
    <name type="ordered locus">LJ_1663</name>
</gene>
<evidence type="ECO:0000255" key="1">
    <source>
        <dbReference type="HAMAP-Rule" id="MF_00046"/>
    </source>
</evidence>
<organism>
    <name type="scientific">Lactobacillus johnsonii (strain CNCM I-12250 / La1 / NCC 533)</name>
    <dbReference type="NCBI Taxonomy" id="257314"/>
    <lineage>
        <taxon>Bacteria</taxon>
        <taxon>Bacillati</taxon>
        <taxon>Bacillota</taxon>
        <taxon>Bacilli</taxon>
        <taxon>Lactobacillales</taxon>
        <taxon>Lactobacillaceae</taxon>
        <taxon>Lactobacillus</taxon>
    </lineage>
</organism>
<accession>P61680</accession>
<comment type="function">
    <text evidence="1">Cell wall formation.</text>
</comment>
<comment type="catalytic activity">
    <reaction evidence="1">
        <text>UDP-N-acetyl-alpha-D-muramate + L-alanine + ATP = UDP-N-acetyl-alpha-D-muramoyl-L-alanine + ADP + phosphate + H(+)</text>
        <dbReference type="Rhea" id="RHEA:23372"/>
        <dbReference type="ChEBI" id="CHEBI:15378"/>
        <dbReference type="ChEBI" id="CHEBI:30616"/>
        <dbReference type="ChEBI" id="CHEBI:43474"/>
        <dbReference type="ChEBI" id="CHEBI:57972"/>
        <dbReference type="ChEBI" id="CHEBI:70757"/>
        <dbReference type="ChEBI" id="CHEBI:83898"/>
        <dbReference type="ChEBI" id="CHEBI:456216"/>
        <dbReference type="EC" id="6.3.2.8"/>
    </reaction>
</comment>
<comment type="pathway">
    <text evidence="1">Cell wall biogenesis; peptidoglycan biosynthesis.</text>
</comment>
<comment type="subcellular location">
    <subcellularLocation>
        <location evidence="1">Cytoplasm</location>
    </subcellularLocation>
</comment>
<comment type="similarity">
    <text evidence="1">Belongs to the MurCDEF family.</text>
</comment>
<dbReference type="EC" id="6.3.2.8" evidence="1"/>
<dbReference type="EMBL" id="AE017198">
    <property type="protein sequence ID" value="AAS09436.1"/>
    <property type="molecule type" value="Genomic_DNA"/>
</dbReference>
<dbReference type="RefSeq" id="WP_011162350.1">
    <property type="nucleotide sequence ID" value="NC_005362.1"/>
</dbReference>
<dbReference type="SMR" id="P61680"/>
<dbReference type="KEGG" id="ljo:LJ_1663"/>
<dbReference type="eggNOG" id="COG0773">
    <property type="taxonomic scope" value="Bacteria"/>
</dbReference>
<dbReference type="HOGENOM" id="CLU_028104_1_0_9"/>
<dbReference type="UniPathway" id="UPA00219"/>
<dbReference type="Proteomes" id="UP000000581">
    <property type="component" value="Chromosome"/>
</dbReference>
<dbReference type="GO" id="GO:0005737">
    <property type="term" value="C:cytoplasm"/>
    <property type="evidence" value="ECO:0007669"/>
    <property type="project" value="UniProtKB-SubCell"/>
</dbReference>
<dbReference type="GO" id="GO:0005524">
    <property type="term" value="F:ATP binding"/>
    <property type="evidence" value="ECO:0007669"/>
    <property type="project" value="UniProtKB-UniRule"/>
</dbReference>
<dbReference type="GO" id="GO:0008763">
    <property type="term" value="F:UDP-N-acetylmuramate-L-alanine ligase activity"/>
    <property type="evidence" value="ECO:0007669"/>
    <property type="project" value="UniProtKB-UniRule"/>
</dbReference>
<dbReference type="GO" id="GO:0051301">
    <property type="term" value="P:cell division"/>
    <property type="evidence" value="ECO:0007669"/>
    <property type="project" value="UniProtKB-KW"/>
</dbReference>
<dbReference type="GO" id="GO:0071555">
    <property type="term" value="P:cell wall organization"/>
    <property type="evidence" value="ECO:0007669"/>
    <property type="project" value="UniProtKB-KW"/>
</dbReference>
<dbReference type="GO" id="GO:0009252">
    <property type="term" value="P:peptidoglycan biosynthetic process"/>
    <property type="evidence" value="ECO:0007669"/>
    <property type="project" value="UniProtKB-UniRule"/>
</dbReference>
<dbReference type="GO" id="GO:0008360">
    <property type="term" value="P:regulation of cell shape"/>
    <property type="evidence" value="ECO:0007669"/>
    <property type="project" value="UniProtKB-KW"/>
</dbReference>
<dbReference type="Gene3D" id="3.90.190.20">
    <property type="entry name" value="Mur ligase, C-terminal domain"/>
    <property type="match status" value="1"/>
</dbReference>
<dbReference type="Gene3D" id="3.40.1190.10">
    <property type="entry name" value="Mur-like, catalytic domain"/>
    <property type="match status" value="1"/>
</dbReference>
<dbReference type="Gene3D" id="3.40.50.720">
    <property type="entry name" value="NAD(P)-binding Rossmann-like Domain"/>
    <property type="match status" value="1"/>
</dbReference>
<dbReference type="HAMAP" id="MF_00046">
    <property type="entry name" value="MurC"/>
    <property type="match status" value="1"/>
</dbReference>
<dbReference type="InterPro" id="IPR036565">
    <property type="entry name" value="Mur-like_cat_sf"/>
</dbReference>
<dbReference type="InterPro" id="IPR004101">
    <property type="entry name" value="Mur_ligase_C"/>
</dbReference>
<dbReference type="InterPro" id="IPR036615">
    <property type="entry name" value="Mur_ligase_C_dom_sf"/>
</dbReference>
<dbReference type="InterPro" id="IPR013221">
    <property type="entry name" value="Mur_ligase_cen"/>
</dbReference>
<dbReference type="InterPro" id="IPR000713">
    <property type="entry name" value="Mur_ligase_N"/>
</dbReference>
<dbReference type="InterPro" id="IPR050061">
    <property type="entry name" value="MurCDEF_pg_biosynth"/>
</dbReference>
<dbReference type="InterPro" id="IPR005758">
    <property type="entry name" value="UDP-N-AcMur_Ala_ligase_MurC"/>
</dbReference>
<dbReference type="NCBIfam" id="TIGR01082">
    <property type="entry name" value="murC"/>
    <property type="match status" value="1"/>
</dbReference>
<dbReference type="PANTHER" id="PTHR43445:SF3">
    <property type="entry name" value="UDP-N-ACETYLMURAMATE--L-ALANINE LIGASE"/>
    <property type="match status" value="1"/>
</dbReference>
<dbReference type="PANTHER" id="PTHR43445">
    <property type="entry name" value="UDP-N-ACETYLMURAMATE--L-ALANINE LIGASE-RELATED"/>
    <property type="match status" value="1"/>
</dbReference>
<dbReference type="Pfam" id="PF01225">
    <property type="entry name" value="Mur_ligase"/>
    <property type="match status" value="1"/>
</dbReference>
<dbReference type="Pfam" id="PF02875">
    <property type="entry name" value="Mur_ligase_C"/>
    <property type="match status" value="1"/>
</dbReference>
<dbReference type="Pfam" id="PF08245">
    <property type="entry name" value="Mur_ligase_M"/>
    <property type="match status" value="1"/>
</dbReference>
<dbReference type="SUPFAM" id="SSF51984">
    <property type="entry name" value="MurCD N-terminal domain"/>
    <property type="match status" value="1"/>
</dbReference>
<dbReference type="SUPFAM" id="SSF53623">
    <property type="entry name" value="MurD-like peptide ligases, catalytic domain"/>
    <property type="match status" value="1"/>
</dbReference>
<dbReference type="SUPFAM" id="SSF53244">
    <property type="entry name" value="MurD-like peptide ligases, peptide-binding domain"/>
    <property type="match status" value="1"/>
</dbReference>
<sequence>MLDKNKQIWFIGIKGTGMASLALVLHDLGYNVAGSDIEKYTFTQVPLEKAGIEVKNFDPANIKSNAEQVIVKGNAFKQDNPEVAACLDKNVEWQSYPDTVEEIVQMHTSIGVSGTHGKTSTTSLLAHVLGEVAPTSYLIGDGRGKGVEGSRFFVYEADEYRRHFLAYHPDYQIMTNIDFDHPDYFKDQDDYTSAFQTAADQTKKALFVWGDDKRLQSLKTDIPKYTYGFKDTDDFQAVNIEKTTTGSKFNVLAHGKDLGRFEIHLFGDHSILNTTAVIAVAYTEKVPMDDIKEGLLTFKGAKRRFAEKDFGDVSVIDDYAHHPTEMRATIQAARQKFPDKELVVVFQPHTFSRTKKYQKDFEEILRDVDKAYVTPIYASAREASGDISSEDLVNNIPGSEVIDLDNIADLTKHKNAVVVFMGAGDIPKYEDAYEKLL</sequence>
<keyword id="KW-0067">ATP-binding</keyword>
<keyword id="KW-0131">Cell cycle</keyword>
<keyword id="KW-0132">Cell division</keyword>
<keyword id="KW-0133">Cell shape</keyword>
<keyword id="KW-0961">Cell wall biogenesis/degradation</keyword>
<keyword id="KW-0963">Cytoplasm</keyword>
<keyword id="KW-0436">Ligase</keyword>
<keyword id="KW-0547">Nucleotide-binding</keyword>
<keyword id="KW-0573">Peptidoglycan synthesis</keyword>